<accession>A1ZAI3</accession>
<accession>Q8MRC5</accession>
<gene>
    <name type="ORF">CG8303</name>
</gene>
<organism>
    <name type="scientific">Drosophila melanogaster</name>
    <name type="common">Fruit fly</name>
    <dbReference type="NCBI Taxonomy" id="7227"/>
    <lineage>
        <taxon>Eukaryota</taxon>
        <taxon>Metazoa</taxon>
        <taxon>Ecdysozoa</taxon>
        <taxon>Arthropoda</taxon>
        <taxon>Hexapoda</taxon>
        <taxon>Insecta</taxon>
        <taxon>Pterygota</taxon>
        <taxon>Neoptera</taxon>
        <taxon>Endopterygota</taxon>
        <taxon>Diptera</taxon>
        <taxon>Brachycera</taxon>
        <taxon>Muscomorpha</taxon>
        <taxon>Ephydroidea</taxon>
        <taxon>Drosophilidae</taxon>
        <taxon>Drosophila</taxon>
        <taxon>Sophophora</taxon>
    </lineage>
</organism>
<proteinExistence type="evidence at transcript level"/>
<protein>
    <recommendedName>
        <fullName evidence="2 8">Putative fatty acyl-CoA reductase CG8303</fullName>
        <ecNumber evidence="2">1.2.1.84</ecNumber>
    </recommendedName>
</protein>
<feature type="chain" id="PRO_0000376020" description="Putative fatty acyl-CoA reductase CG8303">
    <location>
        <begin position="1"/>
        <end position="543"/>
    </location>
</feature>
<feature type="transmembrane region" description="Helical" evidence="4">
    <location>
        <begin position="386"/>
        <end position="406"/>
    </location>
</feature>
<feature type="transmembrane region" description="Helical" evidence="4">
    <location>
        <begin position="500"/>
        <end position="520"/>
    </location>
</feature>
<feature type="transmembrane region" description="Helical" evidence="4">
    <location>
        <begin position="522"/>
        <end position="542"/>
    </location>
</feature>
<feature type="region of interest" description="Disordered" evidence="5">
    <location>
        <begin position="1"/>
        <end position="29"/>
    </location>
</feature>
<feature type="compositionally biased region" description="Polar residues" evidence="5">
    <location>
        <begin position="8"/>
        <end position="22"/>
    </location>
</feature>
<comment type="function">
    <text evidence="2">Catalyzes the reduction of C16 or C18 fatty acyl-CoA to fatty alcohols.</text>
</comment>
<comment type="catalytic activity">
    <reaction evidence="3">
        <text>a long-chain fatty acyl-CoA + 2 NADPH + 2 H(+) = a long-chain primary fatty alcohol + 2 NADP(+) + CoA</text>
        <dbReference type="Rhea" id="RHEA:52716"/>
        <dbReference type="ChEBI" id="CHEBI:15378"/>
        <dbReference type="ChEBI" id="CHEBI:57287"/>
        <dbReference type="ChEBI" id="CHEBI:57783"/>
        <dbReference type="ChEBI" id="CHEBI:58349"/>
        <dbReference type="ChEBI" id="CHEBI:77396"/>
        <dbReference type="ChEBI" id="CHEBI:83139"/>
        <dbReference type="EC" id="1.2.1.84"/>
    </reaction>
    <physiologicalReaction direction="left-to-right" evidence="3">
        <dbReference type="Rhea" id="RHEA:52717"/>
    </physiologicalReaction>
</comment>
<comment type="catalytic activity">
    <reaction evidence="3">
        <text>hexadecanoyl-CoA + 2 NADPH + 2 H(+) = hexadecan-1-ol + 2 NADP(+) + CoA</text>
        <dbReference type="Rhea" id="RHEA:36315"/>
        <dbReference type="ChEBI" id="CHEBI:15378"/>
        <dbReference type="ChEBI" id="CHEBI:16125"/>
        <dbReference type="ChEBI" id="CHEBI:57287"/>
        <dbReference type="ChEBI" id="CHEBI:57379"/>
        <dbReference type="ChEBI" id="CHEBI:57783"/>
        <dbReference type="ChEBI" id="CHEBI:58349"/>
        <dbReference type="EC" id="1.2.1.84"/>
    </reaction>
    <physiologicalReaction direction="left-to-right" evidence="3">
        <dbReference type="Rhea" id="RHEA:36316"/>
    </physiologicalReaction>
</comment>
<comment type="catalytic activity">
    <reaction evidence="1">
        <text>octadecanoyl-CoA + 2 NADPH + 2 H(+) = octadecan-1-ol + 2 NADP(+) + CoA</text>
        <dbReference type="Rhea" id="RHEA:36319"/>
        <dbReference type="ChEBI" id="CHEBI:15378"/>
        <dbReference type="ChEBI" id="CHEBI:32154"/>
        <dbReference type="ChEBI" id="CHEBI:57287"/>
        <dbReference type="ChEBI" id="CHEBI:57394"/>
        <dbReference type="ChEBI" id="CHEBI:57783"/>
        <dbReference type="ChEBI" id="CHEBI:58349"/>
        <dbReference type="EC" id="1.2.1.84"/>
    </reaction>
    <physiologicalReaction direction="left-to-right" evidence="1">
        <dbReference type="Rhea" id="RHEA:36320"/>
    </physiologicalReaction>
</comment>
<comment type="subcellular location">
    <subcellularLocation>
        <location evidence="4">Membrane</location>
        <topology evidence="4">Multi-pass membrane protein</topology>
    </subcellularLocation>
</comment>
<comment type="similarity">
    <text evidence="4">Belongs to the fatty acyl-CoA reductase family.</text>
</comment>
<comment type="sequence caution" evidence="7">
    <conflict type="erroneous initiation">
        <sequence resource="EMBL-CDS" id="AAM51995"/>
    </conflict>
    <text>Extended N-terminus.</text>
</comment>
<reference evidence="8" key="1">
    <citation type="journal article" date="2000" name="Science">
        <title>The genome sequence of Drosophila melanogaster.</title>
        <authorList>
            <person name="Adams M.D."/>
            <person name="Celniker S.E."/>
            <person name="Holt R.A."/>
            <person name="Evans C.A."/>
            <person name="Gocayne J.D."/>
            <person name="Amanatides P.G."/>
            <person name="Scherer S.E."/>
            <person name="Li P.W."/>
            <person name="Hoskins R.A."/>
            <person name="Galle R.F."/>
            <person name="George R.A."/>
            <person name="Lewis S.E."/>
            <person name="Richards S."/>
            <person name="Ashburner M."/>
            <person name="Henderson S.N."/>
            <person name="Sutton G.G."/>
            <person name="Wortman J.R."/>
            <person name="Yandell M.D."/>
            <person name="Zhang Q."/>
            <person name="Chen L.X."/>
            <person name="Brandon R.C."/>
            <person name="Rogers Y.-H.C."/>
            <person name="Blazej R.G."/>
            <person name="Champe M."/>
            <person name="Pfeiffer B.D."/>
            <person name="Wan K.H."/>
            <person name="Doyle C."/>
            <person name="Baxter E.G."/>
            <person name="Helt G."/>
            <person name="Nelson C.R."/>
            <person name="Miklos G.L.G."/>
            <person name="Abril J.F."/>
            <person name="Agbayani A."/>
            <person name="An H.-J."/>
            <person name="Andrews-Pfannkoch C."/>
            <person name="Baldwin D."/>
            <person name="Ballew R.M."/>
            <person name="Basu A."/>
            <person name="Baxendale J."/>
            <person name="Bayraktaroglu L."/>
            <person name="Beasley E.M."/>
            <person name="Beeson K.Y."/>
            <person name="Benos P.V."/>
            <person name="Berman B.P."/>
            <person name="Bhandari D."/>
            <person name="Bolshakov S."/>
            <person name="Borkova D."/>
            <person name="Botchan M.R."/>
            <person name="Bouck J."/>
            <person name="Brokstein P."/>
            <person name="Brottier P."/>
            <person name="Burtis K.C."/>
            <person name="Busam D.A."/>
            <person name="Butler H."/>
            <person name="Cadieu E."/>
            <person name="Center A."/>
            <person name="Chandra I."/>
            <person name="Cherry J.M."/>
            <person name="Cawley S."/>
            <person name="Dahlke C."/>
            <person name="Davenport L.B."/>
            <person name="Davies P."/>
            <person name="de Pablos B."/>
            <person name="Delcher A."/>
            <person name="Deng Z."/>
            <person name="Mays A.D."/>
            <person name="Dew I."/>
            <person name="Dietz S.M."/>
            <person name="Dodson K."/>
            <person name="Doup L.E."/>
            <person name="Downes M."/>
            <person name="Dugan-Rocha S."/>
            <person name="Dunkov B.C."/>
            <person name="Dunn P."/>
            <person name="Durbin K.J."/>
            <person name="Evangelista C.C."/>
            <person name="Ferraz C."/>
            <person name="Ferriera S."/>
            <person name="Fleischmann W."/>
            <person name="Fosler C."/>
            <person name="Gabrielian A.E."/>
            <person name="Garg N.S."/>
            <person name="Gelbart W.M."/>
            <person name="Glasser K."/>
            <person name="Glodek A."/>
            <person name="Gong F."/>
            <person name="Gorrell J.H."/>
            <person name="Gu Z."/>
            <person name="Guan P."/>
            <person name="Harris M."/>
            <person name="Harris N.L."/>
            <person name="Harvey D.A."/>
            <person name="Heiman T.J."/>
            <person name="Hernandez J.R."/>
            <person name="Houck J."/>
            <person name="Hostin D."/>
            <person name="Houston K.A."/>
            <person name="Howland T.J."/>
            <person name="Wei M.-H."/>
            <person name="Ibegwam C."/>
            <person name="Jalali M."/>
            <person name="Kalush F."/>
            <person name="Karpen G.H."/>
            <person name="Ke Z."/>
            <person name="Kennison J.A."/>
            <person name="Ketchum K.A."/>
            <person name="Kimmel B.E."/>
            <person name="Kodira C.D."/>
            <person name="Kraft C.L."/>
            <person name="Kravitz S."/>
            <person name="Kulp D."/>
            <person name="Lai Z."/>
            <person name="Lasko P."/>
            <person name="Lei Y."/>
            <person name="Levitsky A.A."/>
            <person name="Li J.H."/>
            <person name="Li Z."/>
            <person name="Liang Y."/>
            <person name="Lin X."/>
            <person name="Liu X."/>
            <person name="Mattei B."/>
            <person name="McIntosh T.C."/>
            <person name="McLeod M.P."/>
            <person name="McPherson D."/>
            <person name="Merkulov G."/>
            <person name="Milshina N.V."/>
            <person name="Mobarry C."/>
            <person name="Morris J."/>
            <person name="Moshrefi A."/>
            <person name="Mount S.M."/>
            <person name="Moy M."/>
            <person name="Murphy B."/>
            <person name="Murphy L."/>
            <person name="Muzny D.M."/>
            <person name="Nelson D.L."/>
            <person name="Nelson D.R."/>
            <person name="Nelson K.A."/>
            <person name="Nixon K."/>
            <person name="Nusskern D.R."/>
            <person name="Pacleb J.M."/>
            <person name="Palazzolo M."/>
            <person name="Pittman G.S."/>
            <person name="Pan S."/>
            <person name="Pollard J."/>
            <person name="Puri V."/>
            <person name="Reese M.G."/>
            <person name="Reinert K."/>
            <person name="Remington K."/>
            <person name="Saunders R.D.C."/>
            <person name="Scheeler F."/>
            <person name="Shen H."/>
            <person name="Shue B.C."/>
            <person name="Siden-Kiamos I."/>
            <person name="Simpson M."/>
            <person name="Skupski M.P."/>
            <person name="Smith T.J."/>
            <person name="Spier E."/>
            <person name="Spradling A.C."/>
            <person name="Stapleton M."/>
            <person name="Strong R."/>
            <person name="Sun E."/>
            <person name="Svirskas R."/>
            <person name="Tector C."/>
            <person name="Turner R."/>
            <person name="Venter E."/>
            <person name="Wang A.H."/>
            <person name="Wang X."/>
            <person name="Wang Z.-Y."/>
            <person name="Wassarman D.A."/>
            <person name="Weinstock G.M."/>
            <person name="Weissenbach J."/>
            <person name="Williams S.M."/>
            <person name="Woodage T."/>
            <person name="Worley K.C."/>
            <person name="Wu D."/>
            <person name="Yang S."/>
            <person name="Yao Q.A."/>
            <person name="Ye J."/>
            <person name="Yeh R.-F."/>
            <person name="Zaveri J.S."/>
            <person name="Zhan M."/>
            <person name="Zhang G."/>
            <person name="Zhao Q."/>
            <person name="Zheng L."/>
            <person name="Zheng X.H."/>
            <person name="Zhong F.N."/>
            <person name="Zhong W."/>
            <person name="Zhou X."/>
            <person name="Zhu S.C."/>
            <person name="Zhu X."/>
            <person name="Smith H.O."/>
            <person name="Gibbs R.A."/>
            <person name="Myers E.W."/>
            <person name="Rubin G.M."/>
            <person name="Venter J.C."/>
        </authorList>
    </citation>
    <scope>NUCLEOTIDE SEQUENCE [LARGE SCALE GENOMIC DNA]</scope>
    <source>
        <strain>Berkeley</strain>
    </source>
</reference>
<reference evidence="7 8" key="2">
    <citation type="journal article" date="2002" name="Genome Biol.">
        <title>Annotation of the Drosophila melanogaster euchromatic genome: a systematic review.</title>
        <authorList>
            <person name="Misra S."/>
            <person name="Crosby M.A."/>
            <person name="Mungall C.J."/>
            <person name="Matthews B.B."/>
            <person name="Campbell K.S."/>
            <person name="Hradecky P."/>
            <person name="Huang Y."/>
            <person name="Kaminker J.S."/>
            <person name="Millburn G.H."/>
            <person name="Prochnik S.E."/>
            <person name="Smith C.D."/>
            <person name="Tupy J.L."/>
            <person name="Whitfield E.J."/>
            <person name="Bayraktaroglu L."/>
            <person name="Berman B.P."/>
            <person name="Bettencourt B.R."/>
            <person name="Celniker S.E."/>
            <person name="de Grey A.D.N.J."/>
            <person name="Drysdale R.A."/>
            <person name="Harris N.L."/>
            <person name="Richter J."/>
            <person name="Russo S."/>
            <person name="Schroeder A.J."/>
            <person name="Shu S.Q."/>
            <person name="Stapleton M."/>
            <person name="Yamada C."/>
            <person name="Ashburner M."/>
            <person name="Gelbart W.M."/>
            <person name="Rubin G.M."/>
            <person name="Lewis S.E."/>
        </authorList>
    </citation>
    <scope>GENOME REANNOTATION</scope>
    <source>
        <strain>Berkeley</strain>
    </source>
</reference>
<reference evidence="7 9" key="3">
    <citation type="journal article" date="2002" name="Genome Biol.">
        <title>A Drosophila full-length cDNA resource.</title>
        <authorList>
            <person name="Stapleton M."/>
            <person name="Carlson J.W."/>
            <person name="Brokstein P."/>
            <person name="Yu C."/>
            <person name="Champe M."/>
            <person name="George R.A."/>
            <person name="Guarin H."/>
            <person name="Kronmiller B."/>
            <person name="Pacleb J.M."/>
            <person name="Park S."/>
            <person name="Wan K.H."/>
            <person name="Rubin G.M."/>
            <person name="Celniker S.E."/>
        </authorList>
    </citation>
    <scope>NUCLEOTIDE SEQUENCE [LARGE SCALE MRNA]</scope>
    <source>
        <strain evidence="9">Berkeley</strain>
        <tissue evidence="6">Embryo</tissue>
    </source>
</reference>
<dbReference type="EC" id="1.2.1.84" evidence="2"/>
<dbReference type="EMBL" id="AE013599">
    <property type="protein sequence ID" value="AAF57976.3"/>
    <property type="molecule type" value="Genomic_DNA"/>
</dbReference>
<dbReference type="EMBL" id="AY121668">
    <property type="protein sequence ID" value="AAM51995.1"/>
    <property type="status" value="ALT_INIT"/>
    <property type="molecule type" value="mRNA"/>
</dbReference>
<dbReference type="RefSeq" id="NP_001286495.1">
    <property type="nucleotide sequence ID" value="NM_001299566.1"/>
</dbReference>
<dbReference type="RefSeq" id="NP_611141.3">
    <property type="nucleotide sequence ID" value="NM_137297.3"/>
</dbReference>
<dbReference type="SMR" id="A1ZAI3"/>
<dbReference type="BioGRID" id="62571">
    <property type="interactions" value="9"/>
</dbReference>
<dbReference type="FunCoup" id="A1ZAI3">
    <property type="interactions" value="11"/>
</dbReference>
<dbReference type="IntAct" id="A1ZAI3">
    <property type="interactions" value="11"/>
</dbReference>
<dbReference type="STRING" id="7227.FBpp0309070"/>
<dbReference type="PaxDb" id="7227-FBpp0271896"/>
<dbReference type="DNASU" id="36858"/>
<dbReference type="EnsemblMetazoa" id="FBtr0340064">
    <property type="protein sequence ID" value="FBpp0309070"/>
    <property type="gene ID" value="FBgn0034143"/>
</dbReference>
<dbReference type="EnsemblMetazoa" id="FBtr0340065">
    <property type="protein sequence ID" value="FBpp0309071"/>
    <property type="gene ID" value="FBgn0034143"/>
</dbReference>
<dbReference type="GeneID" id="36858"/>
<dbReference type="KEGG" id="dme:Dmel_CG8303"/>
<dbReference type="UCSC" id="CG8303-RB">
    <property type="organism name" value="d. melanogaster"/>
</dbReference>
<dbReference type="AGR" id="FB:FBgn0034143"/>
<dbReference type="FlyBase" id="FBgn0034143">
    <property type="gene designation" value="CG8303"/>
</dbReference>
<dbReference type="VEuPathDB" id="VectorBase:FBgn0034143"/>
<dbReference type="eggNOG" id="KOG1221">
    <property type="taxonomic scope" value="Eukaryota"/>
</dbReference>
<dbReference type="GeneTree" id="ENSGT00390000006367"/>
<dbReference type="HOGENOM" id="CLU_024661_0_2_1"/>
<dbReference type="InParanoid" id="A1ZAI3"/>
<dbReference type="OMA" id="RVFQNGT"/>
<dbReference type="OrthoDB" id="429813at2759"/>
<dbReference type="PhylomeDB" id="A1ZAI3"/>
<dbReference type="Reactome" id="R-DME-9640463">
    <property type="pathway name" value="Wax biosynthesis"/>
</dbReference>
<dbReference type="BioGRID-ORCS" id="36858">
    <property type="hits" value="0 hits in 3 CRISPR screens"/>
</dbReference>
<dbReference type="GenomeRNAi" id="36858"/>
<dbReference type="PRO" id="PR:A1ZAI3"/>
<dbReference type="Proteomes" id="UP000000803">
    <property type="component" value="Chromosome 2R"/>
</dbReference>
<dbReference type="Bgee" id="FBgn0034143">
    <property type="expression patterns" value="Expressed in posterior terminal follicle cell in ovary and 67 other cell types or tissues"/>
</dbReference>
<dbReference type="ExpressionAtlas" id="A1ZAI3">
    <property type="expression patterns" value="baseline and differential"/>
</dbReference>
<dbReference type="GO" id="GO:0005778">
    <property type="term" value="C:peroxisomal membrane"/>
    <property type="evidence" value="ECO:0000250"/>
    <property type="project" value="UniProtKB"/>
</dbReference>
<dbReference type="GO" id="GO:0005777">
    <property type="term" value="C:peroxisome"/>
    <property type="evidence" value="ECO:0000250"/>
    <property type="project" value="UniProtKB"/>
</dbReference>
<dbReference type="GO" id="GO:0102965">
    <property type="term" value="F:alcohol-forming long-chain fatty acyl-CoA reductase activity"/>
    <property type="evidence" value="ECO:0000250"/>
    <property type="project" value="FlyBase"/>
</dbReference>
<dbReference type="GO" id="GO:0080019">
    <property type="term" value="F:alcohol-forming very long-chain fatty acyl-CoA reductase activity"/>
    <property type="evidence" value="ECO:0000250"/>
    <property type="project" value="UniProtKB"/>
</dbReference>
<dbReference type="GO" id="GO:0035336">
    <property type="term" value="P:long-chain fatty-acyl-CoA metabolic process"/>
    <property type="evidence" value="ECO:0000318"/>
    <property type="project" value="GO_Central"/>
</dbReference>
<dbReference type="GO" id="GO:0010025">
    <property type="term" value="P:wax biosynthetic process"/>
    <property type="evidence" value="ECO:0000250"/>
    <property type="project" value="UniProtKB"/>
</dbReference>
<dbReference type="CDD" id="cd05236">
    <property type="entry name" value="FAR-N_SDR_e"/>
    <property type="match status" value="1"/>
</dbReference>
<dbReference type="CDD" id="cd09071">
    <property type="entry name" value="FAR_C"/>
    <property type="match status" value="1"/>
</dbReference>
<dbReference type="FunFam" id="3.40.50.720:FF:000624">
    <property type="entry name" value="Fatty acyl-CoA reductase"/>
    <property type="match status" value="1"/>
</dbReference>
<dbReference type="Gene3D" id="3.40.50.720">
    <property type="entry name" value="NAD(P)-binding Rossmann-like Domain"/>
    <property type="match status" value="1"/>
</dbReference>
<dbReference type="InterPro" id="IPR026055">
    <property type="entry name" value="FAR"/>
</dbReference>
<dbReference type="InterPro" id="IPR033640">
    <property type="entry name" value="FAR_C"/>
</dbReference>
<dbReference type="InterPro" id="IPR013120">
    <property type="entry name" value="Far_NAD-bd"/>
</dbReference>
<dbReference type="InterPro" id="IPR036291">
    <property type="entry name" value="NAD(P)-bd_dom_sf"/>
</dbReference>
<dbReference type="PANTHER" id="PTHR11011:SF116">
    <property type="entry name" value="FATTY ACYL-COA REDUCTASE CG5065-RELATED"/>
    <property type="match status" value="1"/>
</dbReference>
<dbReference type="PANTHER" id="PTHR11011">
    <property type="entry name" value="MALE STERILITY PROTEIN 2-RELATED"/>
    <property type="match status" value="1"/>
</dbReference>
<dbReference type="Pfam" id="PF07993">
    <property type="entry name" value="NAD_binding_4"/>
    <property type="match status" value="1"/>
</dbReference>
<dbReference type="Pfam" id="PF03015">
    <property type="entry name" value="Sterile"/>
    <property type="match status" value="1"/>
</dbReference>
<dbReference type="SUPFAM" id="SSF51735">
    <property type="entry name" value="NAD(P)-binding Rossmann-fold domains"/>
    <property type="match status" value="1"/>
</dbReference>
<name>FACR2_DROME</name>
<evidence type="ECO:0000250" key="1">
    <source>
        <dbReference type="UniProtKB" id="Q7TNT2"/>
    </source>
</evidence>
<evidence type="ECO:0000250" key="2">
    <source>
        <dbReference type="UniProtKB" id="Q8WVX9"/>
    </source>
</evidence>
<evidence type="ECO:0000250" key="3">
    <source>
        <dbReference type="UniProtKB" id="Q96K12"/>
    </source>
</evidence>
<evidence type="ECO:0000255" key="4"/>
<evidence type="ECO:0000256" key="5">
    <source>
        <dbReference type="SAM" id="MobiDB-lite"/>
    </source>
</evidence>
<evidence type="ECO:0000269" key="6">
    <source>
    </source>
</evidence>
<evidence type="ECO:0000305" key="7"/>
<evidence type="ECO:0000312" key="8">
    <source>
        <dbReference type="EMBL" id="AAF57976.3"/>
    </source>
</evidence>
<evidence type="ECO:0000312" key="9">
    <source>
        <dbReference type="EMBL" id="AAM51995.1"/>
    </source>
</evidence>
<keyword id="KW-0444">Lipid biosynthesis</keyword>
<keyword id="KW-0443">Lipid metabolism</keyword>
<keyword id="KW-0472">Membrane</keyword>
<keyword id="KW-0521">NADP</keyword>
<keyword id="KW-0560">Oxidoreductase</keyword>
<keyword id="KW-1185">Reference proteome</keyword>
<keyword id="KW-0812">Transmembrane</keyword>
<keyword id="KW-1133">Transmembrane helix</keyword>
<sequence>MAVITEHGGTTSSPPENNNSIGNGKHRVNGHQLSTSLTIPEFFAHKNIFVTGGTGFLGTVLIEALLDTHPDIGTIYVLVRGKRKFDPNERIRRLLQKPIFEKYSEKTLSKVVPVVGELSEPNFGFGPELLQELIDRVNVIYHSAATIKFSSPLRTAIRTNLTGTMRTIELAKQLKQLAAYIYCSTAFCNSNNRGLIAEEVYKSQFDPYEMMKMAEDDSAWEDFTDQKCKGYIRDHPNTYTFTKNLSENLLMAEMSGLPAAIVRPSIVYGTLEHPMKGWVGNANSGHLGFLAGFVKGIFRTMCGNANAVIDIIPCDYVINSSLVMGWYVGTRKLEQPEIIHCTSGEVNPLNLAEFCTIINDSVERHPPNSFVWKPVTKLRNGWRYNLFFYLFHLLPAMVFIIPEKLFGIGMPQHTAYEYMRVFQKGTKAFDYFLDKDFRYSLKNALRISALIPESDRRRYNFDASQCDWSEFIDRCLIGIRRFYFKESAVTTDWHRNYWKVFNVLYYAGYVVIFAVLYFALTLTLGLQIGLTLAVLIWGFLVWL</sequence>